<name>UPPP_CERS1</name>
<sequence length="268" mass="28262">MLDSTTLVALVLGLLEGLTEFIPVSSTGHLLLAGHFLGFESAGRSFEVVIQLGAVLAVLTVYAAKLVSVIRAAPHDPRAFRFLVAVLVAFLPAVVIGVLAHGFIKAVLFETPILIATMLILGGIVLLFVDRMAPEPRYDDAMDLPLNVALKIGFIQCLAMVPGVSRSGATIVGGLMLGAGKRAAAEFSFFLSMPTMAGAFAFDLFKNRDVLDASALGEIAVGFVAAFVAAVLVVRWLLGYVSRHGYALFGWWRIAVGSVALAALLAGY</sequence>
<feature type="chain" id="PRO_0000290755" description="Undecaprenyl-diphosphatase">
    <location>
        <begin position="1"/>
        <end position="268"/>
    </location>
</feature>
<feature type="transmembrane region" description="Helical" evidence="1">
    <location>
        <begin position="4"/>
        <end position="24"/>
    </location>
</feature>
<feature type="transmembrane region" description="Helical" evidence="1">
    <location>
        <begin position="50"/>
        <end position="70"/>
    </location>
</feature>
<feature type="transmembrane region" description="Helical" evidence="1">
    <location>
        <begin position="84"/>
        <end position="104"/>
    </location>
</feature>
<feature type="transmembrane region" description="Helical" evidence="1">
    <location>
        <begin position="109"/>
        <end position="129"/>
    </location>
</feature>
<feature type="transmembrane region" description="Helical" evidence="1">
    <location>
        <begin position="144"/>
        <end position="164"/>
    </location>
</feature>
<feature type="transmembrane region" description="Helical" evidence="1">
    <location>
        <begin position="185"/>
        <end position="205"/>
    </location>
</feature>
<feature type="transmembrane region" description="Helical" evidence="1">
    <location>
        <begin position="214"/>
        <end position="234"/>
    </location>
</feature>
<feature type="transmembrane region" description="Helical" evidence="1">
    <location>
        <begin position="247"/>
        <end position="267"/>
    </location>
</feature>
<proteinExistence type="inferred from homology"/>
<organism>
    <name type="scientific">Cereibacter sphaeroides (strain ATCC 17029 / ATH 2.4.9)</name>
    <name type="common">Rhodobacter sphaeroides</name>
    <dbReference type="NCBI Taxonomy" id="349101"/>
    <lineage>
        <taxon>Bacteria</taxon>
        <taxon>Pseudomonadati</taxon>
        <taxon>Pseudomonadota</taxon>
        <taxon>Alphaproteobacteria</taxon>
        <taxon>Rhodobacterales</taxon>
        <taxon>Paracoccaceae</taxon>
        <taxon>Cereibacter</taxon>
    </lineage>
</organism>
<reference key="1">
    <citation type="submission" date="2007-02" db="EMBL/GenBank/DDBJ databases">
        <title>Complete sequence of chromosome 1 of Rhodobacter sphaeroides ATCC 17029.</title>
        <authorList>
            <person name="Copeland A."/>
            <person name="Lucas S."/>
            <person name="Lapidus A."/>
            <person name="Barry K."/>
            <person name="Detter J.C."/>
            <person name="Glavina del Rio T."/>
            <person name="Hammon N."/>
            <person name="Israni S."/>
            <person name="Dalin E."/>
            <person name="Tice H."/>
            <person name="Pitluck S."/>
            <person name="Kiss H."/>
            <person name="Brettin T."/>
            <person name="Bruce D."/>
            <person name="Han C."/>
            <person name="Tapia R."/>
            <person name="Gilna P."/>
            <person name="Schmutz J."/>
            <person name="Larimer F."/>
            <person name="Land M."/>
            <person name="Hauser L."/>
            <person name="Kyrpides N."/>
            <person name="Mikhailova N."/>
            <person name="Richardson P."/>
            <person name="Mackenzie C."/>
            <person name="Choudhary M."/>
            <person name="Donohue T.J."/>
            <person name="Kaplan S."/>
        </authorList>
    </citation>
    <scope>NUCLEOTIDE SEQUENCE [LARGE SCALE GENOMIC DNA]</scope>
    <source>
        <strain>ATCC 17029 / ATH 2.4.9</strain>
    </source>
</reference>
<keyword id="KW-0046">Antibiotic resistance</keyword>
<keyword id="KW-0997">Cell inner membrane</keyword>
<keyword id="KW-1003">Cell membrane</keyword>
<keyword id="KW-0133">Cell shape</keyword>
<keyword id="KW-0961">Cell wall biogenesis/degradation</keyword>
<keyword id="KW-0378">Hydrolase</keyword>
<keyword id="KW-0472">Membrane</keyword>
<keyword id="KW-0573">Peptidoglycan synthesis</keyword>
<keyword id="KW-0812">Transmembrane</keyword>
<keyword id="KW-1133">Transmembrane helix</keyword>
<evidence type="ECO:0000255" key="1">
    <source>
        <dbReference type="HAMAP-Rule" id="MF_01006"/>
    </source>
</evidence>
<dbReference type="EC" id="3.6.1.27" evidence="1"/>
<dbReference type="EMBL" id="CP000577">
    <property type="protein sequence ID" value="ABN77913.1"/>
    <property type="molecule type" value="Genomic_DNA"/>
</dbReference>
<dbReference type="RefSeq" id="WP_002721584.1">
    <property type="nucleotide sequence ID" value="NC_009049.1"/>
</dbReference>
<dbReference type="SMR" id="A3PNJ7"/>
<dbReference type="KEGG" id="rsh:Rsph17029_2811"/>
<dbReference type="HOGENOM" id="CLU_060296_2_0_5"/>
<dbReference type="GO" id="GO:0005886">
    <property type="term" value="C:plasma membrane"/>
    <property type="evidence" value="ECO:0007669"/>
    <property type="project" value="UniProtKB-SubCell"/>
</dbReference>
<dbReference type="GO" id="GO:0050380">
    <property type="term" value="F:undecaprenyl-diphosphatase activity"/>
    <property type="evidence" value="ECO:0007669"/>
    <property type="project" value="UniProtKB-UniRule"/>
</dbReference>
<dbReference type="GO" id="GO:0071555">
    <property type="term" value="P:cell wall organization"/>
    <property type="evidence" value="ECO:0007669"/>
    <property type="project" value="UniProtKB-KW"/>
</dbReference>
<dbReference type="GO" id="GO:0009252">
    <property type="term" value="P:peptidoglycan biosynthetic process"/>
    <property type="evidence" value="ECO:0007669"/>
    <property type="project" value="UniProtKB-KW"/>
</dbReference>
<dbReference type="GO" id="GO:0008360">
    <property type="term" value="P:regulation of cell shape"/>
    <property type="evidence" value="ECO:0007669"/>
    <property type="project" value="UniProtKB-KW"/>
</dbReference>
<dbReference type="GO" id="GO:0046677">
    <property type="term" value="P:response to antibiotic"/>
    <property type="evidence" value="ECO:0007669"/>
    <property type="project" value="UniProtKB-UniRule"/>
</dbReference>
<dbReference type="HAMAP" id="MF_01006">
    <property type="entry name" value="Undec_diphosphatase"/>
    <property type="match status" value="1"/>
</dbReference>
<dbReference type="InterPro" id="IPR003824">
    <property type="entry name" value="UppP"/>
</dbReference>
<dbReference type="NCBIfam" id="NF001389">
    <property type="entry name" value="PRK00281.1-2"/>
    <property type="match status" value="1"/>
</dbReference>
<dbReference type="NCBIfam" id="NF001390">
    <property type="entry name" value="PRK00281.1-4"/>
    <property type="match status" value="1"/>
</dbReference>
<dbReference type="NCBIfam" id="TIGR00753">
    <property type="entry name" value="undec_PP_bacA"/>
    <property type="match status" value="1"/>
</dbReference>
<dbReference type="PANTHER" id="PTHR30622">
    <property type="entry name" value="UNDECAPRENYL-DIPHOSPHATASE"/>
    <property type="match status" value="1"/>
</dbReference>
<dbReference type="PANTHER" id="PTHR30622:SF3">
    <property type="entry name" value="UNDECAPRENYL-DIPHOSPHATASE"/>
    <property type="match status" value="1"/>
</dbReference>
<dbReference type="Pfam" id="PF02673">
    <property type="entry name" value="BacA"/>
    <property type="match status" value="1"/>
</dbReference>
<accession>A3PNJ7</accession>
<protein>
    <recommendedName>
        <fullName evidence="1">Undecaprenyl-diphosphatase</fullName>
        <ecNumber evidence="1">3.6.1.27</ecNumber>
    </recommendedName>
    <alternativeName>
        <fullName evidence="1">Bacitracin resistance protein</fullName>
    </alternativeName>
    <alternativeName>
        <fullName evidence="1">Undecaprenyl pyrophosphate phosphatase</fullName>
    </alternativeName>
</protein>
<comment type="function">
    <text evidence="1">Catalyzes the dephosphorylation of undecaprenyl diphosphate (UPP). Confers resistance to bacitracin.</text>
</comment>
<comment type="catalytic activity">
    <reaction evidence="1">
        <text>di-trans,octa-cis-undecaprenyl diphosphate + H2O = di-trans,octa-cis-undecaprenyl phosphate + phosphate + H(+)</text>
        <dbReference type="Rhea" id="RHEA:28094"/>
        <dbReference type="ChEBI" id="CHEBI:15377"/>
        <dbReference type="ChEBI" id="CHEBI:15378"/>
        <dbReference type="ChEBI" id="CHEBI:43474"/>
        <dbReference type="ChEBI" id="CHEBI:58405"/>
        <dbReference type="ChEBI" id="CHEBI:60392"/>
        <dbReference type="EC" id="3.6.1.27"/>
    </reaction>
</comment>
<comment type="subcellular location">
    <subcellularLocation>
        <location evidence="1">Cell inner membrane</location>
        <topology evidence="1">Multi-pass membrane protein</topology>
    </subcellularLocation>
</comment>
<comment type="miscellaneous">
    <text>Bacitracin is thought to be involved in the inhibition of peptidoglycan synthesis by sequestering undecaprenyl diphosphate, thereby reducing the pool of lipid carrier available.</text>
</comment>
<comment type="similarity">
    <text evidence="1">Belongs to the UppP family.</text>
</comment>
<gene>
    <name evidence="1" type="primary">uppP</name>
    <name type="ordered locus">Rsph17029_2811</name>
</gene>